<organism>
    <name type="scientific">Paracidovorax citrulli (strain AAC00-1)</name>
    <name type="common">Acidovorax citrulli</name>
    <dbReference type="NCBI Taxonomy" id="397945"/>
    <lineage>
        <taxon>Bacteria</taxon>
        <taxon>Pseudomonadati</taxon>
        <taxon>Pseudomonadota</taxon>
        <taxon>Betaproteobacteria</taxon>
        <taxon>Burkholderiales</taxon>
        <taxon>Comamonadaceae</taxon>
        <taxon>Paracidovorax</taxon>
    </lineage>
</organism>
<protein>
    <recommendedName>
        <fullName evidence="1">Imidazoleglycerol-phosphate dehydratase</fullName>
        <shortName evidence="1">IGPD</shortName>
        <ecNumber evidence="1">4.2.1.19</ecNumber>
    </recommendedName>
</protein>
<feature type="chain" id="PRO_0000336289" description="Imidazoleglycerol-phosphate dehydratase">
    <location>
        <begin position="1"/>
        <end position="209"/>
    </location>
</feature>
<dbReference type="EC" id="4.2.1.19" evidence="1"/>
<dbReference type="EMBL" id="CP000512">
    <property type="protein sequence ID" value="ABM31629.1"/>
    <property type="molecule type" value="Genomic_DNA"/>
</dbReference>
<dbReference type="RefSeq" id="WP_011794187.1">
    <property type="nucleotide sequence ID" value="NC_008752.1"/>
</dbReference>
<dbReference type="SMR" id="A1TKZ1"/>
<dbReference type="STRING" id="397945.Aave_1032"/>
<dbReference type="KEGG" id="aav:Aave_1032"/>
<dbReference type="eggNOG" id="COG0131">
    <property type="taxonomic scope" value="Bacteria"/>
</dbReference>
<dbReference type="HOGENOM" id="CLU_044308_3_0_4"/>
<dbReference type="OrthoDB" id="9790411at2"/>
<dbReference type="UniPathway" id="UPA00031">
    <property type="reaction ID" value="UER00011"/>
</dbReference>
<dbReference type="Proteomes" id="UP000002596">
    <property type="component" value="Chromosome"/>
</dbReference>
<dbReference type="GO" id="GO:0005737">
    <property type="term" value="C:cytoplasm"/>
    <property type="evidence" value="ECO:0007669"/>
    <property type="project" value="UniProtKB-SubCell"/>
</dbReference>
<dbReference type="GO" id="GO:0004424">
    <property type="term" value="F:imidazoleglycerol-phosphate dehydratase activity"/>
    <property type="evidence" value="ECO:0007669"/>
    <property type="project" value="UniProtKB-UniRule"/>
</dbReference>
<dbReference type="GO" id="GO:0000105">
    <property type="term" value="P:L-histidine biosynthetic process"/>
    <property type="evidence" value="ECO:0007669"/>
    <property type="project" value="UniProtKB-UniRule"/>
</dbReference>
<dbReference type="CDD" id="cd07914">
    <property type="entry name" value="IGPD"/>
    <property type="match status" value="1"/>
</dbReference>
<dbReference type="FunFam" id="3.30.230.40:FF:000001">
    <property type="entry name" value="Imidazoleglycerol-phosphate dehydratase HisB"/>
    <property type="match status" value="1"/>
</dbReference>
<dbReference type="FunFam" id="3.30.230.40:FF:000003">
    <property type="entry name" value="Imidazoleglycerol-phosphate dehydratase HisB"/>
    <property type="match status" value="1"/>
</dbReference>
<dbReference type="Gene3D" id="3.30.230.40">
    <property type="entry name" value="Imidazole glycerol phosphate dehydratase, domain 1"/>
    <property type="match status" value="2"/>
</dbReference>
<dbReference type="HAMAP" id="MF_00076">
    <property type="entry name" value="HisB"/>
    <property type="match status" value="1"/>
</dbReference>
<dbReference type="InterPro" id="IPR038494">
    <property type="entry name" value="IGPD_sf"/>
</dbReference>
<dbReference type="InterPro" id="IPR000807">
    <property type="entry name" value="ImidazoleglycerolP_deHydtase"/>
</dbReference>
<dbReference type="InterPro" id="IPR020565">
    <property type="entry name" value="ImidazoleglycerP_deHydtase_CS"/>
</dbReference>
<dbReference type="InterPro" id="IPR020568">
    <property type="entry name" value="Ribosomal_Su5_D2-typ_SF"/>
</dbReference>
<dbReference type="NCBIfam" id="NF002106">
    <property type="entry name" value="PRK00951.1-1"/>
    <property type="match status" value="1"/>
</dbReference>
<dbReference type="NCBIfam" id="NF002109">
    <property type="entry name" value="PRK00951.1-5"/>
    <property type="match status" value="1"/>
</dbReference>
<dbReference type="NCBIfam" id="NF002111">
    <property type="entry name" value="PRK00951.2-1"/>
    <property type="match status" value="1"/>
</dbReference>
<dbReference type="NCBIfam" id="NF002114">
    <property type="entry name" value="PRK00951.2-4"/>
    <property type="match status" value="1"/>
</dbReference>
<dbReference type="PANTHER" id="PTHR23133:SF2">
    <property type="entry name" value="IMIDAZOLEGLYCEROL-PHOSPHATE DEHYDRATASE"/>
    <property type="match status" value="1"/>
</dbReference>
<dbReference type="PANTHER" id="PTHR23133">
    <property type="entry name" value="IMIDAZOLEGLYCEROL-PHOSPHATE DEHYDRATASE HIS7"/>
    <property type="match status" value="1"/>
</dbReference>
<dbReference type="Pfam" id="PF00475">
    <property type="entry name" value="IGPD"/>
    <property type="match status" value="1"/>
</dbReference>
<dbReference type="SUPFAM" id="SSF54211">
    <property type="entry name" value="Ribosomal protein S5 domain 2-like"/>
    <property type="match status" value="2"/>
</dbReference>
<dbReference type="PROSITE" id="PS00954">
    <property type="entry name" value="IGP_DEHYDRATASE_1"/>
    <property type="match status" value="1"/>
</dbReference>
<dbReference type="PROSITE" id="PS00955">
    <property type="entry name" value="IGP_DEHYDRATASE_2"/>
    <property type="match status" value="1"/>
</dbReference>
<evidence type="ECO:0000255" key="1">
    <source>
        <dbReference type="HAMAP-Rule" id="MF_00076"/>
    </source>
</evidence>
<accession>A1TKZ1</accession>
<reference key="1">
    <citation type="submission" date="2006-12" db="EMBL/GenBank/DDBJ databases">
        <title>Complete sequence of Acidovorax avenae subsp. citrulli AAC00-1.</title>
        <authorList>
            <person name="Copeland A."/>
            <person name="Lucas S."/>
            <person name="Lapidus A."/>
            <person name="Barry K."/>
            <person name="Detter J.C."/>
            <person name="Glavina del Rio T."/>
            <person name="Dalin E."/>
            <person name="Tice H."/>
            <person name="Pitluck S."/>
            <person name="Kiss H."/>
            <person name="Brettin T."/>
            <person name="Bruce D."/>
            <person name="Han C."/>
            <person name="Tapia R."/>
            <person name="Gilna P."/>
            <person name="Schmutz J."/>
            <person name="Larimer F."/>
            <person name="Land M."/>
            <person name="Hauser L."/>
            <person name="Kyrpides N."/>
            <person name="Kim E."/>
            <person name="Stahl D."/>
            <person name="Richardson P."/>
        </authorList>
    </citation>
    <scope>NUCLEOTIDE SEQUENCE [LARGE SCALE GENOMIC DNA]</scope>
    <source>
        <strain>AAC00-1</strain>
    </source>
</reference>
<name>HIS7_PARC0</name>
<proteinExistence type="inferred from homology"/>
<sequence>MTSSALVPSTASEGDRIAEVARNTAETRIRVRVNLDGTGNARLSSGIGFFDHMLDQIARHGLIDLDIECEGDLHIDGHHTVEDVGITLGQAFARAVGDKKGIRRYGHAYVPLDEALSRVVVDFSGRPGLHMDVKFTAGSIGQLDTQLVYEFFQGFVNHAGVTLHIDNLKGFNAHHQCETIFKAFARALRAALARDPRSAGVIPSTKGSL</sequence>
<keyword id="KW-0028">Amino-acid biosynthesis</keyword>
<keyword id="KW-0963">Cytoplasm</keyword>
<keyword id="KW-0368">Histidine biosynthesis</keyword>
<keyword id="KW-0456">Lyase</keyword>
<gene>
    <name evidence="1" type="primary">hisB</name>
    <name type="ordered locus">Aave_1032</name>
</gene>
<comment type="catalytic activity">
    <reaction evidence="1">
        <text>D-erythro-1-(imidazol-4-yl)glycerol 3-phosphate = 3-(imidazol-4-yl)-2-oxopropyl phosphate + H2O</text>
        <dbReference type="Rhea" id="RHEA:11040"/>
        <dbReference type="ChEBI" id="CHEBI:15377"/>
        <dbReference type="ChEBI" id="CHEBI:57766"/>
        <dbReference type="ChEBI" id="CHEBI:58278"/>
        <dbReference type="EC" id="4.2.1.19"/>
    </reaction>
</comment>
<comment type="pathway">
    <text evidence="1">Amino-acid biosynthesis; L-histidine biosynthesis; L-histidine from 5-phospho-alpha-D-ribose 1-diphosphate: step 6/9.</text>
</comment>
<comment type="subcellular location">
    <subcellularLocation>
        <location evidence="1">Cytoplasm</location>
    </subcellularLocation>
</comment>
<comment type="similarity">
    <text evidence="1">Belongs to the imidazoleglycerol-phosphate dehydratase family.</text>
</comment>